<protein>
    <recommendedName>
        <fullName evidence="1">Probable septum site-determining protein MinC</fullName>
    </recommendedName>
</protein>
<comment type="function">
    <text evidence="1">Cell division inhibitor that blocks the formation of polar Z ring septums. Rapidly oscillates between the poles of the cell to destabilize FtsZ filaments that have formed before they mature into polar Z rings. Prevents FtsZ polymerization.</text>
</comment>
<comment type="subunit">
    <text evidence="1">Interacts with MinD and FtsZ.</text>
</comment>
<comment type="similarity">
    <text evidence="1">Belongs to the MinC family.</text>
</comment>
<name>MINC_RALN1</name>
<proteinExistence type="inferred from homology"/>
<gene>
    <name evidence="1" type="primary">minC</name>
    <name type="ordered locus">RSc3364</name>
    <name type="ORF">RS02639</name>
</gene>
<accession>Q8XU30</accession>
<keyword id="KW-0131">Cell cycle</keyword>
<keyword id="KW-0132">Cell division</keyword>
<keyword id="KW-1185">Reference proteome</keyword>
<keyword id="KW-0717">Septation</keyword>
<sequence length="255" mass="27400">MSQKKAPLFEIRSGTVDALLLSPRTADMDALAAELTRRFADTPEFFSNDVIAIDVRRLAADERLPIDRLVETLTGLRARAIGVVASPEQAEWAQACGLPLLDSHGRRPRGERSEEAAEAVPAAAEPVPAPAASPAPPVEAVAMQPGAMIIEKPLRSGQRVYARGDLVVLDLVSDGAEVIAEGNIYVYASLRGRALAGVKGNLDARIFCTCLEPQLISIAGIYRTGETPWPEAFASKPAQIRLSENTLVLEPLRMK</sequence>
<evidence type="ECO:0000255" key="1">
    <source>
        <dbReference type="HAMAP-Rule" id="MF_00267"/>
    </source>
</evidence>
<evidence type="ECO:0000256" key="2">
    <source>
        <dbReference type="SAM" id="MobiDB-lite"/>
    </source>
</evidence>
<organism>
    <name type="scientific">Ralstonia nicotianae (strain ATCC BAA-1114 / GMI1000)</name>
    <name type="common">Ralstonia solanacearum</name>
    <dbReference type="NCBI Taxonomy" id="267608"/>
    <lineage>
        <taxon>Bacteria</taxon>
        <taxon>Pseudomonadati</taxon>
        <taxon>Pseudomonadota</taxon>
        <taxon>Betaproteobacteria</taxon>
        <taxon>Burkholderiales</taxon>
        <taxon>Burkholderiaceae</taxon>
        <taxon>Ralstonia</taxon>
        <taxon>Ralstonia solanacearum species complex</taxon>
    </lineage>
</organism>
<dbReference type="EMBL" id="AL646052">
    <property type="protein sequence ID" value="CAD16861.1"/>
    <property type="molecule type" value="Genomic_DNA"/>
</dbReference>
<dbReference type="RefSeq" id="WP_011003246.1">
    <property type="nucleotide sequence ID" value="NC_003295.1"/>
</dbReference>
<dbReference type="SMR" id="Q8XU30"/>
<dbReference type="STRING" id="267608.RSc3364"/>
<dbReference type="EnsemblBacteria" id="CAD16861">
    <property type="protein sequence ID" value="CAD16861"/>
    <property type="gene ID" value="RSc3364"/>
</dbReference>
<dbReference type="KEGG" id="rso:RSc3364"/>
<dbReference type="eggNOG" id="COG0850">
    <property type="taxonomic scope" value="Bacteria"/>
</dbReference>
<dbReference type="HOGENOM" id="CLU_067812_0_0_4"/>
<dbReference type="Proteomes" id="UP000001436">
    <property type="component" value="Chromosome"/>
</dbReference>
<dbReference type="GO" id="GO:0000902">
    <property type="term" value="P:cell morphogenesis"/>
    <property type="evidence" value="ECO:0007669"/>
    <property type="project" value="InterPro"/>
</dbReference>
<dbReference type="GO" id="GO:0000917">
    <property type="term" value="P:division septum assembly"/>
    <property type="evidence" value="ECO:0007669"/>
    <property type="project" value="UniProtKB-KW"/>
</dbReference>
<dbReference type="GO" id="GO:0051302">
    <property type="term" value="P:regulation of cell division"/>
    <property type="evidence" value="ECO:0007669"/>
    <property type="project" value="InterPro"/>
</dbReference>
<dbReference type="GO" id="GO:1901891">
    <property type="term" value="P:regulation of cell septum assembly"/>
    <property type="evidence" value="ECO:0007669"/>
    <property type="project" value="InterPro"/>
</dbReference>
<dbReference type="Gene3D" id="2.160.20.70">
    <property type="match status" value="1"/>
</dbReference>
<dbReference type="Gene3D" id="3.30.70.260">
    <property type="match status" value="1"/>
</dbReference>
<dbReference type="HAMAP" id="MF_00267">
    <property type="entry name" value="MinC"/>
    <property type="match status" value="1"/>
</dbReference>
<dbReference type="InterPro" id="IPR016098">
    <property type="entry name" value="CAP/MinC_C"/>
</dbReference>
<dbReference type="InterPro" id="IPR013033">
    <property type="entry name" value="MinC"/>
</dbReference>
<dbReference type="InterPro" id="IPR036145">
    <property type="entry name" value="MinC_C_sf"/>
</dbReference>
<dbReference type="InterPro" id="IPR007874">
    <property type="entry name" value="MinC_N"/>
</dbReference>
<dbReference type="InterPro" id="IPR005526">
    <property type="entry name" value="Septum_form_inhib_MinC_C"/>
</dbReference>
<dbReference type="NCBIfam" id="TIGR01222">
    <property type="entry name" value="minC"/>
    <property type="match status" value="1"/>
</dbReference>
<dbReference type="PANTHER" id="PTHR34108">
    <property type="entry name" value="SEPTUM SITE-DETERMINING PROTEIN MINC"/>
    <property type="match status" value="1"/>
</dbReference>
<dbReference type="PANTHER" id="PTHR34108:SF1">
    <property type="entry name" value="SEPTUM SITE-DETERMINING PROTEIN MINC"/>
    <property type="match status" value="1"/>
</dbReference>
<dbReference type="Pfam" id="PF03775">
    <property type="entry name" value="MinC_C"/>
    <property type="match status" value="1"/>
</dbReference>
<dbReference type="Pfam" id="PF05209">
    <property type="entry name" value="MinC_N"/>
    <property type="match status" value="1"/>
</dbReference>
<dbReference type="SUPFAM" id="SSF63848">
    <property type="entry name" value="Cell-division inhibitor MinC, C-terminal domain"/>
    <property type="match status" value="1"/>
</dbReference>
<feature type="chain" id="PRO_0000189057" description="Probable septum site-determining protein MinC">
    <location>
        <begin position="1"/>
        <end position="255"/>
    </location>
</feature>
<feature type="region of interest" description="Disordered" evidence="2">
    <location>
        <begin position="103"/>
        <end position="136"/>
    </location>
</feature>
<feature type="compositionally biased region" description="Basic and acidic residues" evidence="2">
    <location>
        <begin position="103"/>
        <end position="115"/>
    </location>
</feature>
<feature type="compositionally biased region" description="Pro residues" evidence="2">
    <location>
        <begin position="127"/>
        <end position="136"/>
    </location>
</feature>
<reference key="1">
    <citation type="journal article" date="2002" name="Nature">
        <title>Genome sequence of the plant pathogen Ralstonia solanacearum.</title>
        <authorList>
            <person name="Salanoubat M."/>
            <person name="Genin S."/>
            <person name="Artiguenave F."/>
            <person name="Gouzy J."/>
            <person name="Mangenot S."/>
            <person name="Arlat M."/>
            <person name="Billault A."/>
            <person name="Brottier P."/>
            <person name="Camus J.-C."/>
            <person name="Cattolico L."/>
            <person name="Chandler M."/>
            <person name="Choisne N."/>
            <person name="Claudel-Renard C."/>
            <person name="Cunnac S."/>
            <person name="Demange N."/>
            <person name="Gaspin C."/>
            <person name="Lavie M."/>
            <person name="Moisan A."/>
            <person name="Robert C."/>
            <person name="Saurin W."/>
            <person name="Schiex T."/>
            <person name="Siguier P."/>
            <person name="Thebault P."/>
            <person name="Whalen M."/>
            <person name="Wincker P."/>
            <person name="Levy M."/>
            <person name="Weissenbach J."/>
            <person name="Boucher C.A."/>
        </authorList>
    </citation>
    <scope>NUCLEOTIDE SEQUENCE [LARGE SCALE GENOMIC DNA]</scope>
    <source>
        <strain>ATCC BAA-1114 / GMI1000</strain>
    </source>
</reference>